<name>LIPA_CHLAD</name>
<protein>
    <recommendedName>
        <fullName evidence="1">Lipoyl synthase</fullName>
        <ecNumber evidence="1">2.8.1.8</ecNumber>
    </recommendedName>
    <alternativeName>
        <fullName evidence="1">Lip-syn</fullName>
        <shortName evidence="1">LS</shortName>
    </alternativeName>
    <alternativeName>
        <fullName evidence="1">Lipoate synthase</fullName>
    </alternativeName>
    <alternativeName>
        <fullName evidence="1">Lipoic acid synthase</fullName>
    </alternativeName>
    <alternativeName>
        <fullName evidence="1">Sulfur insertion protein LipA</fullName>
    </alternativeName>
</protein>
<organism>
    <name type="scientific">Chloroflexus aggregans (strain MD-66 / DSM 9485)</name>
    <dbReference type="NCBI Taxonomy" id="326427"/>
    <lineage>
        <taxon>Bacteria</taxon>
        <taxon>Bacillati</taxon>
        <taxon>Chloroflexota</taxon>
        <taxon>Chloroflexia</taxon>
        <taxon>Chloroflexales</taxon>
        <taxon>Chloroflexineae</taxon>
        <taxon>Chloroflexaceae</taxon>
        <taxon>Chloroflexus</taxon>
    </lineage>
</organism>
<evidence type="ECO:0000255" key="1">
    <source>
        <dbReference type="HAMAP-Rule" id="MF_00206"/>
    </source>
</evidence>
<evidence type="ECO:0000255" key="2">
    <source>
        <dbReference type="PROSITE-ProRule" id="PRU01266"/>
    </source>
</evidence>
<comment type="function">
    <text evidence="1">Catalyzes the radical-mediated insertion of two sulfur atoms into the C-6 and C-8 positions of the octanoyl moiety bound to the lipoyl domains of lipoate-dependent enzymes, thereby converting the octanoylated domains into lipoylated derivatives.</text>
</comment>
<comment type="catalytic activity">
    <reaction evidence="1">
        <text>[[Fe-S] cluster scaffold protein carrying a second [4Fe-4S](2+) cluster] + N(6)-octanoyl-L-lysyl-[protein] + 2 oxidized [2Fe-2S]-[ferredoxin] + 2 S-adenosyl-L-methionine + 4 H(+) = [[Fe-S] cluster scaffold protein] + N(6)-[(R)-dihydrolipoyl]-L-lysyl-[protein] + 4 Fe(3+) + 2 hydrogen sulfide + 2 5'-deoxyadenosine + 2 L-methionine + 2 reduced [2Fe-2S]-[ferredoxin]</text>
        <dbReference type="Rhea" id="RHEA:16585"/>
        <dbReference type="Rhea" id="RHEA-COMP:9928"/>
        <dbReference type="Rhea" id="RHEA-COMP:10000"/>
        <dbReference type="Rhea" id="RHEA-COMP:10001"/>
        <dbReference type="Rhea" id="RHEA-COMP:10475"/>
        <dbReference type="Rhea" id="RHEA-COMP:14568"/>
        <dbReference type="Rhea" id="RHEA-COMP:14569"/>
        <dbReference type="ChEBI" id="CHEBI:15378"/>
        <dbReference type="ChEBI" id="CHEBI:17319"/>
        <dbReference type="ChEBI" id="CHEBI:29034"/>
        <dbReference type="ChEBI" id="CHEBI:29919"/>
        <dbReference type="ChEBI" id="CHEBI:33722"/>
        <dbReference type="ChEBI" id="CHEBI:33737"/>
        <dbReference type="ChEBI" id="CHEBI:33738"/>
        <dbReference type="ChEBI" id="CHEBI:57844"/>
        <dbReference type="ChEBI" id="CHEBI:59789"/>
        <dbReference type="ChEBI" id="CHEBI:78809"/>
        <dbReference type="ChEBI" id="CHEBI:83100"/>
        <dbReference type="EC" id="2.8.1.8"/>
    </reaction>
</comment>
<comment type="cofactor">
    <cofactor evidence="1">
        <name>[4Fe-4S] cluster</name>
        <dbReference type="ChEBI" id="CHEBI:49883"/>
    </cofactor>
    <text evidence="1">Binds 2 [4Fe-4S] clusters per subunit. One cluster is coordinated with 3 cysteines and an exchangeable S-adenosyl-L-methionine.</text>
</comment>
<comment type="pathway">
    <text evidence="1">Protein modification; protein lipoylation via endogenous pathway; protein N(6)-(lipoyl)lysine from octanoyl-[acyl-carrier-protein]: step 2/2.</text>
</comment>
<comment type="subcellular location">
    <subcellularLocation>
        <location evidence="1">Cytoplasm</location>
    </subcellularLocation>
</comment>
<comment type="similarity">
    <text evidence="1">Belongs to the radical SAM superfamily. Lipoyl synthase family.</text>
</comment>
<feature type="chain" id="PRO_1000124626" description="Lipoyl synthase">
    <location>
        <begin position="1"/>
        <end position="306"/>
    </location>
</feature>
<feature type="domain" description="Radical SAM core" evidence="2">
    <location>
        <begin position="67"/>
        <end position="283"/>
    </location>
</feature>
<feature type="binding site" evidence="1">
    <location>
        <position position="55"/>
    </location>
    <ligand>
        <name>[4Fe-4S] cluster</name>
        <dbReference type="ChEBI" id="CHEBI:49883"/>
        <label>1</label>
    </ligand>
</feature>
<feature type="binding site" evidence="1">
    <location>
        <position position="60"/>
    </location>
    <ligand>
        <name>[4Fe-4S] cluster</name>
        <dbReference type="ChEBI" id="CHEBI:49883"/>
        <label>1</label>
    </ligand>
</feature>
<feature type="binding site" evidence="1">
    <location>
        <position position="66"/>
    </location>
    <ligand>
        <name>[4Fe-4S] cluster</name>
        <dbReference type="ChEBI" id="CHEBI:49883"/>
        <label>1</label>
    </ligand>
</feature>
<feature type="binding site" evidence="1">
    <location>
        <position position="81"/>
    </location>
    <ligand>
        <name>[4Fe-4S] cluster</name>
        <dbReference type="ChEBI" id="CHEBI:49883"/>
        <label>2</label>
        <note>4Fe-4S-S-AdoMet</note>
    </ligand>
</feature>
<feature type="binding site" evidence="1">
    <location>
        <position position="85"/>
    </location>
    <ligand>
        <name>[4Fe-4S] cluster</name>
        <dbReference type="ChEBI" id="CHEBI:49883"/>
        <label>2</label>
        <note>4Fe-4S-S-AdoMet</note>
    </ligand>
</feature>
<feature type="binding site" evidence="1">
    <location>
        <position position="88"/>
    </location>
    <ligand>
        <name>[4Fe-4S] cluster</name>
        <dbReference type="ChEBI" id="CHEBI:49883"/>
        <label>2</label>
        <note>4Fe-4S-S-AdoMet</note>
    </ligand>
</feature>
<feature type="binding site" evidence="1">
    <location>
        <position position="294"/>
    </location>
    <ligand>
        <name>[4Fe-4S] cluster</name>
        <dbReference type="ChEBI" id="CHEBI:49883"/>
        <label>1</label>
    </ligand>
</feature>
<accession>B8G782</accession>
<gene>
    <name evidence="1" type="primary">lipA</name>
    <name type="ordered locus">Cagg_1129</name>
</gene>
<proteinExistence type="inferred from homology"/>
<keyword id="KW-0004">4Fe-4S</keyword>
<keyword id="KW-0963">Cytoplasm</keyword>
<keyword id="KW-0408">Iron</keyword>
<keyword id="KW-0411">Iron-sulfur</keyword>
<keyword id="KW-0479">Metal-binding</keyword>
<keyword id="KW-0949">S-adenosyl-L-methionine</keyword>
<keyword id="KW-0808">Transferase</keyword>
<reference key="1">
    <citation type="submission" date="2008-12" db="EMBL/GenBank/DDBJ databases">
        <title>Complete sequence of Chloroflexus aggregans DSM 9485.</title>
        <authorList>
            <consortium name="US DOE Joint Genome Institute"/>
            <person name="Lucas S."/>
            <person name="Copeland A."/>
            <person name="Lapidus A."/>
            <person name="Glavina del Rio T."/>
            <person name="Dalin E."/>
            <person name="Tice H."/>
            <person name="Pitluck S."/>
            <person name="Foster B."/>
            <person name="Larimer F."/>
            <person name="Land M."/>
            <person name="Hauser L."/>
            <person name="Kyrpides N."/>
            <person name="Mikhailova N."/>
            <person name="Bryant D.A."/>
            <person name="Richardson P."/>
        </authorList>
    </citation>
    <scope>NUCLEOTIDE SEQUENCE [LARGE SCALE GENOMIC DNA]</scope>
    <source>
        <strain>MD-66 / DSM 9485</strain>
    </source>
</reference>
<sequence>MSELIPLSEVGVVNPTSATTNRPRRPEWLKARAPGGVNYHDVLRLMREKNLHTVCEEARCPNIGECWNHRTATFLLLGDICTRGCRYCAIGKGKPKPIDEEEPERVAESVAHLRLKFAVLTSVNRDDVPDGGAHIFARTIELIRQKVPDCKVEVLIPDFDGNWDALAMVLDAEPDVLNHNIETVPRLFRRFRPRAKFEQSIELLARARAAHPHLVTKSGMMVGAGETNEEVYEVIDRLREVDVNVLTIGQYLAPDASYWPVHRYVTPAEFADFRAYALARGFRHVESGPLVRSSYNAHLHVGAAQH</sequence>
<dbReference type="EC" id="2.8.1.8" evidence="1"/>
<dbReference type="EMBL" id="CP001337">
    <property type="protein sequence ID" value="ACL24039.1"/>
    <property type="molecule type" value="Genomic_DNA"/>
</dbReference>
<dbReference type="RefSeq" id="WP_012616403.1">
    <property type="nucleotide sequence ID" value="NC_011831.1"/>
</dbReference>
<dbReference type="SMR" id="B8G782"/>
<dbReference type="STRING" id="326427.Cagg_1129"/>
<dbReference type="KEGG" id="cag:Cagg_1129"/>
<dbReference type="eggNOG" id="COG0320">
    <property type="taxonomic scope" value="Bacteria"/>
</dbReference>
<dbReference type="HOGENOM" id="CLU_033144_2_1_0"/>
<dbReference type="OrthoDB" id="9787898at2"/>
<dbReference type="UniPathway" id="UPA00538">
    <property type="reaction ID" value="UER00593"/>
</dbReference>
<dbReference type="Proteomes" id="UP000002508">
    <property type="component" value="Chromosome"/>
</dbReference>
<dbReference type="GO" id="GO:0005737">
    <property type="term" value="C:cytoplasm"/>
    <property type="evidence" value="ECO:0007669"/>
    <property type="project" value="UniProtKB-SubCell"/>
</dbReference>
<dbReference type="GO" id="GO:0051539">
    <property type="term" value="F:4 iron, 4 sulfur cluster binding"/>
    <property type="evidence" value="ECO:0007669"/>
    <property type="project" value="UniProtKB-UniRule"/>
</dbReference>
<dbReference type="GO" id="GO:0016992">
    <property type="term" value="F:lipoate synthase activity"/>
    <property type="evidence" value="ECO:0007669"/>
    <property type="project" value="UniProtKB-UniRule"/>
</dbReference>
<dbReference type="GO" id="GO:0046872">
    <property type="term" value="F:metal ion binding"/>
    <property type="evidence" value="ECO:0007669"/>
    <property type="project" value="UniProtKB-KW"/>
</dbReference>
<dbReference type="CDD" id="cd01335">
    <property type="entry name" value="Radical_SAM"/>
    <property type="match status" value="1"/>
</dbReference>
<dbReference type="FunFam" id="3.20.20.70:FF:000040">
    <property type="entry name" value="Lipoyl synthase"/>
    <property type="match status" value="1"/>
</dbReference>
<dbReference type="Gene3D" id="3.20.20.70">
    <property type="entry name" value="Aldolase class I"/>
    <property type="match status" value="1"/>
</dbReference>
<dbReference type="HAMAP" id="MF_00206">
    <property type="entry name" value="Lipoyl_synth"/>
    <property type="match status" value="1"/>
</dbReference>
<dbReference type="InterPro" id="IPR013785">
    <property type="entry name" value="Aldolase_TIM"/>
</dbReference>
<dbReference type="InterPro" id="IPR006638">
    <property type="entry name" value="Elp3/MiaA/NifB-like_rSAM"/>
</dbReference>
<dbReference type="InterPro" id="IPR031691">
    <property type="entry name" value="LIAS_N"/>
</dbReference>
<dbReference type="InterPro" id="IPR003698">
    <property type="entry name" value="Lipoyl_synth"/>
</dbReference>
<dbReference type="InterPro" id="IPR007197">
    <property type="entry name" value="rSAM"/>
</dbReference>
<dbReference type="NCBIfam" id="TIGR00510">
    <property type="entry name" value="lipA"/>
    <property type="match status" value="1"/>
</dbReference>
<dbReference type="NCBIfam" id="NF004019">
    <property type="entry name" value="PRK05481.1"/>
    <property type="match status" value="1"/>
</dbReference>
<dbReference type="NCBIfam" id="NF009544">
    <property type="entry name" value="PRK12928.1"/>
    <property type="match status" value="1"/>
</dbReference>
<dbReference type="PANTHER" id="PTHR10949">
    <property type="entry name" value="LIPOYL SYNTHASE"/>
    <property type="match status" value="1"/>
</dbReference>
<dbReference type="PANTHER" id="PTHR10949:SF0">
    <property type="entry name" value="LIPOYL SYNTHASE, MITOCHONDRIAL"/>
    <property type="match status" value="1"/>
</dbReference>
<dbReference type="Pfam" id="PF16881">
    <property type="entry name" value="LIAS_N"/>
    <property type="match status" value="1"/>
</dbReference>
<dbReference type="Pfam" id="PF04055">
    <property type="entry name" value="Radical_SAM"/>
    <property type="match status" value="1"/>
</dbReference>
<dbReference type="PIRSF" id="PIRSF005963">
    <property type="entry name" value="Lipoyl_synth"/>
    <property type="match status" value="1"/>
</dbReference>
<dbReference type="SFLD" id="SFLDF00271">
    <property type="entry name" value="lipoyl_synthase"/>
    <property type="match status" value="1"/>
</dbReference>
<dbReference type="SFLD" id="SFLDS00029">
    <property type="entry name" value="Radical_SAM"/>
    <property type="match status" value="1"/>
</dbReference>
<dbReference type="SMART" id="SM00729">
    <property type="entry name" value="Elp3"/>
    <property type="match status" value="1"/>
</dbReference>
<dbReference type="SUPFAM" id="SSF102114">
    <property type="entry name" value="Radical SAM enzymes"/>
    <property type="match status" value="1"/>
</dbReference>
<dbReference type="PROSITE" id="PS51918">
    <property type="entry name" value="RADICAL_SAM"/>
    <property type="match status" value="1"/>
</dbReference>